<evidence type="ECO:0000255" key="1">
    <source>
        <dbReference type="HAMAP-Rule" id="MF_00059"/>
    </source>
</evidence>
<comment type="function">
    <text evidence="1">DNA-dependent RNA polymerase catalyzes the transcription of DNA into RNA using the four ribonucleoside triphosphates as substrates.</text>
</comment>
<comment type="catalytic activity">
    <reaction evidence="1">
        <text>RNA(n) + a ribonucleoside 5'-triphosphate = RNA(n+1) + diphosphate</text>
        <dbReference type="Rhea" id="RHEA:21248"/>
        <dbReference type="Rhea" id="RHEA-COMP:14527"/>
        <dbReference type="Rhea" id="RHEA-COMP:17342"/>
        <dbReference type="ChEBI" id="CHEBI:33019"/>
        <dbReference type="ChEBI" id="CHEBI:61557"/>
        <dbReference type="ChEBI" id="CHEBI:140395"/>
        <dbReference type="EC" id="2.7.7.6"/>
    </reaction>
</comment>
<comment type="subunit">
    <text evidence="1">Homodimer. The RNAP catalytic core consists of 2 alpha, 1 beta, 1 beta' and 1 omega subunit. When a sigma factor is associated with the core the holoenzyme is formed, which can initiate transcription.</text>
</comment>
<comment type="domain">
    <text evidence="1">The N-terminal domain is essential for RNAP assembly and basal transcription, whereas the C-terminal domain is involved in interaction with transcriptional regulators and with upstream promoter elements.</text>
</comment>
<comment type="similarity">
    <text evidence="1">Belongs to the RNA polymerase alpha chain family.</text>
</comment>
<gene>
    <name evidence="1" type="primary">rpoA</name>
    <name type="ordered locus">EcE24377A_3778</name>
</gene>
<name>RPOA_ECO24</name>
<dbReference type="EC" id="2.7.7.6" evidence="1"/>
<dbReference type="EMBL" id="CP000800">
    <property type="protein sequence ID" value="ABV19188.1"/>
    <property type="molecule type" value="Genomic_DNA"/>
</dbReference>
<dbReference type="RefSeq" id="WP_001162094.1">
    <property type="nucleotide sequence ID" value="NC_009801.1"/>
</dbReference>
<dbReference type="PDB" id="4YFK">
    <property type="method" value="X-ray"/>
    <property type="resolution" value="3.57 A"/>
    <property type="chains" value="A/B/G/H=1-329"/>
</dbReference>
<dbReference type="PDB" id="4YFN">
    <property type="method" value="X-ray"/>
    <property type="resolution" value="3.82 A"/>
    <property type="chains" value="A/B/G/H=1-329"/>
</dbReference>
<dbReference type="PDB" id="4YFX">
    <property type="method" value="X-ray"/>
    <property type="resolution" value="3.84 A"/>
    <property type="chains" value="A/B/G/H=1-329"/>
</dbReference>
<dbReference type="PDBsum" id="4YFK"/>
<dbReference type="PDBsum" id="4YFN"/>
<dbReference type="PDBsum" id="4YFX"/>
<dbReference type="SMR" id="A7ZSI4"/>
<dbReference type="GeneID" id="93778692"/>
<dbReference type="KEGG" id="ecw:EcE24377A_3778"/>
<dbReference type="HOGENOM" id="CLU_053084_0_0_6"/>
<dbReference type="EvolutionaryTrace" id="A7ZSI4"/>
<dbReference type="Proteomes" id="UP000001122">
    <property type="component" value="Chromosome"/>
</dbReference>
<dbReference type="GO" id="GO:0005737">
    <property type="term" value="C:cytoplasm"/>
    <property type="evidence" value="ECO:0007669"/>
    <property type="project" value="UniProtKB-ARBA"/>
</dbReference>
<dbReference type="GO" id="GO:0000428">
    <property type="term" value="C:DNA-directed RNA polymerase complex"/>
    <property type="evidence" value="ECO:0007669"/>
    <property type="project" value="UniProtKB-KW"/>
</dbReference>
<dbReference type="GO" id="GO:0003677">
    <property type="term" value="F:DNA binding"/>
    <property type="evidence" value="ECO:0007669"/>
    <property type="project" value="UniProtKB-UniRule"/>
</dbReference>
<dbReference type="GO" id="GO:0003899">
    <property type="term" value="F:DNA-directed RNA polymerase activity"/>
    <property type="evidence" value="ECO:0007669"/>
    <property type="project" value="UniProtKB-UniRule"/>
</dbReference>
<dbReference type="GO" id="GO:0046983">
    <property type="term" value="F:protein dimerization activity"/>
    <property type="evidence" value="ECO:0007669"/>
    <property type="project" value="InterPro"/>
</dbReference>
<dbReference type="GO" id="GO:0006351">
    <property type="term" value="P:DNA-templated transcription"/>
    <property type="evidence" value="ECO:0007669"/>
    <property type="project" value="UniProtKB-UniRule"/>
</dbReference>
<dbReference type="CDD" id="cd06928">
    <property type="entry name" value="RNAP_alpha_NTD"/>
    <property type="match status" value="1"/>
</dbReference>
<dbReference type="FunFam" id="1.10.150.20:FF:000001">
    <property type="entry name" value="DNA-directed RNA polymerase subunit alpha"/>
    <property type="match status" value="1"/>
</dbReference>
<dbReference type="FunFam" id="2.170.120.12:FF:000001">
    <property type="entry name" value="DNA-directed RNA polymerase subunit alpha"/>
    <property type="match status" value="1"/>
</dbReference>
<dbReference type="Gene3D" id="1.10.150.20">
    <property type="entry name" value="5' to 3' exonuclease, C-terminal subdomain"/>
    <property type="match status" value="1"/>
</dbReference>
<dbReference type="Gene3D" id="2.170.120.12">
    <property type="entry name" value="DNA-directed RNA polymerase, insert domain"/>
    <property type="match status" value="1"/>
</dbReference>
<dbReference type="Gene3D" id="3.30.1360.10">
    <property type="entry name" value="RNA polymerase, RBP11-like subunit"/>
    <property type="match status" value="1"/>
</dbReference>
<dbReference type="HAMAP" id="MF_00059">
    <property type="entry name" value="RNApol_bact_RpoA"/>
    <property type="match status" value="1"/>
</dbReference>
<dbReference type="InterPro" id="IPR011262">
    <property type="entry name" value="DNA-dir_RNA_pol_insert"/>
</dbReference>
<dbReference type="InterPro" id="IPR011263">
    <property type="entry name" value="DNA-dir_RNA_pol_RpoA/D/Rpb3"/>
</dbReference>
<dbReference type="InterPro" id="IPR011773">
    <property type="entry name" value="DNA-dir_RpoA"/>
</dbReference>
<dbReference type="InterPro" id="IPR036603">
    <property type="entry name" value="RBP11-like"/>
</dbReference>
<dbReference type="InterPro" id="IPR011260">
    <property type="entry name" value="RNAP_asu_C"/>
</dbReference>
<dbReference type="InterPro" id="IPR036643">
    <property type="entry name" value="RNApol_insert_sf"/>
</dbReference>
<dbReference type="NCBIfam" id="NF003513">
    <property type="entry name" value="PRK05182.1-2"/>
    <property type="match status" value="1"/>
</dbReference>
<dbReference type="NCBIfam" id="NF003519">
    <property type="entry name" value="PRK05182.2-5"/>
    <property type="match status" value="1"/>
</dbReference>
<dbReference type="NCBIfam" id="TIGR02027">
    <property type="entry name" value="rpoA"/>
    <property type="match status" value="1"/>
</dbReference>
<dbReference type="Pfam" id="PF01000">
    <property type="entry name" value="RNA_pol_A_bac"/>
    <property type="match status" value="1"/>
</dbReference>
<dbReference type="Pfam" id="PF03118">
    <property type="entry name" value="RNA_pol_A_CTD"/>
    <property type="match status" value="1"/>
</dbReference>
<dbReference type="Pfam" id="PF01193">
    <property type="entry name" value="RNA_pol_L"/>
    <property type="match status" value="1"/>
</dbReference>
<dbReference type="SMART" id="SM00662">
    <property type="entry name" value="RPOLD"/>
    <property type="match status" value="1"/>
</dbReference>
<dbReference type="SUPFAM" id="SSF47789">
    <property type="entry name" value="C-terminal domain of RNA polymerase alpha subunit"/>
    <property type="match status" value="1"/>
</dbReference>
<dbReference type="SUPFAM" id="SSF56553">
    <property type="entry name" value="Insert subdomain of RNA polymerase alpha subunit"/>
    <property type="match status" value="1"/>
</dbReference>
<dbReference type="SUPFAM" id="SSF55257">
    <property type="entry name" value="RBP11-like subunits of RNA polymerase"/>
    <property type="match status" value="1"/>
</dbReference>
<reference key="1">
    <citation type="journal article" date="2008" name="J. Bacteriol.">
        <title>The pangenome structure of Escherichia coli: comparative genomic analysis of E. coli commensal and pathogenic isolates.</title>
        <authorList>
            <person name="Rasko D.A."/>
            <person name="Rosovitz M.J."/>
            <person name="Myers G.S.A."/>
            <person name="Mongodin E.F."/>
            <person name="Fricke W.F."/>
            <person name="Gajer P."/>
            <person name="Crabtree J."/>
            <person name="Sebaihia M."/>
            <person name="Thomson N.R."/>
            <person name="Chaudhuri R."/>
            <person name="Henderson I.R."/>
            <person name="Sperandio V."/>
            <person name="Ravel J."/>
        </authorList>
    </citation>
    <scope>NUCLEOTIDE SEQUENCE [LARGE SCALE GENOMIC DNA]</scope>
    <source>
        <strain>E24377A / ETEC</strain>
    </source>
</reference>
<proteinExistence type="evidence at protein level"/>
<organism>
    <name type="scientific">Escherichia coli O139:H28 (strain E24377A / ETEC)</name>
    <dbReference type="NCBI Taxonomy" id="331111"/>
    <lineage>
        <taxon>Bacteria</taxon>
        <taxon>Pseudomonadati</taxon>
        <taxon>Pseudomonadota</taxon>
        <taxon>Gammaproteobacteria</taxon>
        <taxon>Enterobacterales</taxon>
        <taxon>Enterobacteriaceae</taxon>
        <taxon>Escherichia</taxon>
    </lineage>
</organism>
<sequence>MQGSVTEFLKPRLVDIEQVSSTHAKVTLEPLERGFGHTLGNALRRILLSSMPGCAVTEVEIDGVLHEYSTKEGVQEDILEILLNLKGLAVRVQGKDEVILTLNKSGIGPVTAADITHDGDVEIVKPQHVICHLTDENASISMRIKVQRGRGYVPASTRIHSEEDERPIGRLLVDACYSPVERIAYNVEAARVEQRTDLDKLVIEMETNGTIDPEEAIRRAATILAEQLEAFVDLRDVRQPEVKEEKPEFDPILLRPVDDLELTVRSANCLKAEAIHYIGDLVQRTEVELLKTPNLGKKSLTEIKDVLASRGLSLGMRLENWPPASIADE</sequence>
<protein>
    <recommendedName>
        <fullName evidence="1">DNA-directed RNA polymerase subunit alpha</fullName>
        <shortName evidence="1">RNAP subunit alpha</shortName>
        <ecNumber evidence="1">2.7.7.6</ecNumber>
    </recommendedName>
    <alternativeName>
        <fullName evidence="1">RNA polymerase subunit alpha</fullName>
    </alternativeName>
    <alternativeName>
        <fullName evidence="1">Transcriptase subunit alpha</fullName>
    </alternativeName>
</protein>
<feature type="chain" id="PRO_0000323630" description="DNA-directed RNA polymerase subunit alpha">
    <location>
        <begin position="1"/>
        <end position="329"/>
    </location>
</feature>
<feature type="region of interest" description="Alpha N-terminal domain (alpha-NTD)" evidence="1">
    <location>
        <begin position="1"/>
        <end position="235"/>
    </location>
</feature>
<feature type="region of interest" description="Alpha C-terminal domain (alpha-CTD)" evidence="1">
    <location>
        <begin position="249"/>
        <end position="329"/>
    </location>
</feature>
<keyword id="KW-0002">3D-structure</keyword>
<keyword id="KW-0240">DNA-directed RNA polymerase</keyword>
<keyword id="KW-0548">Nucleotidyltransferase</keyword>
<keyword id="KW-1185">Reference proteome</keyword>
<keyword id="KW-0804">Transcription</keyword>
<keyword id="KW-0808">Transferase</keyword>
<accession>A7ZSI4</accession>